<comment type="function">
    <text evidence="1">Can catalyze the hydrolysis of ATP in the presence of single-stranded DNA, the ATP-dependent uptake of single-stranded DNA by duplex DNA, and the ATP-dependent hybridization of homologous single-stranded DNAs. It interacts with LexA causing its activation and leading to its autocatalytic cleavage.</text>
</comment>
<comment type="subcellular location">
    <subcellularLocation>
        <location evidence="1">Cytoplasm</location>
    </subcellularLocation>
</comment>
<comment type="similarity">
    <text evidence="1">Belongs to the RecA family.</text>
</comment>
<proteinExistence type="inferred from homology"/>
<dbReference type="EMBL" id="CP000439">
    <property type="protein sequence ID" value="ABK89033.1"/>
    <property type="molecule type" value="Genomic_DNA"/>
</dbReference>
<dbReference type="RefSeq" id="WP_003032781.1">
    <property type="nucleotide sequence ID" value="NZ_CP009633.1"/>
</dbReference>
<dbReference type="SMR" id="A0Q468"/>
<dbReference type="GeneID" id="75264380"/>
<dbReference type="KEGG" id="ftn:FTN_0122"/>
<dbReference type="KEGG" id="ftx:AW25_78"/>
<dbReference type="BioCyc" id="FTUL401614:G1G75-126-MONOMER"/>
<dbReference type="Proteomes" id="UP000000762">
    <property type="component" value="Chromosome"/>
</dbReference>
<dbReference type="GO" id="GO:0005829">
    <property type="term" value="C:cytosol"/>
    <property type="evidence" value="ECO:0007669"/>
    <property type="project" value="TreeGrafter"/>
</dbReference>
<dbReference type="GO" id="GO:0005524">
    <property type="term" value="F:ATP binding"/>
    <property type="evidence" value="ECO:0007669"/>
    <property type="project" value="UniProtKB-UniRule"/>
</dbReference>
<dbReference type="GO" id="GO:0016887">
    <property type="term" value="F:ATP hydrolysis activity"/>
    <property type="evidence" value="ECO:0007669"/>
    <property type="project" value="InterPro"/>
</dbReference>
<dbReference type="GO" id="GO:0140664">
    <property type="term" value="F:ATP-dependent DNA damage sensor activity"/>
    <property type="evidence" value="ECO:0007669"/>
    <property type="project" value="InterPro"/>
</dbReference>
<dbReference type="GO" id="GO:0003684">
    <property type="term" value="F:damaged DNA binding"/>
    <property type="evidence" value="ECO:0007669"/>
    <property type="project" value="UniProtKB-UniRule"/>
</dbReference>
<dbReference type="GO" id="GO:0003697">
    <property type="term" value="F:single-stranded DNA binding"/>
    <property type="evidence" value="ECO:0007669"/>
    <property type="project" value="UniProtKB-UniRule"/>
</dbReference>
<dbReference type="GO" id="GO:0006310">
    <property type="term" value="P:DNA recombination"/>
    <property type="evidence" value="ECO:0007669"/>
    <property type="project" value="UniProtKB-UniRule"/>
</dbReference>
<dbReference type="GO" id="GO:0006281">
    <property type="term" value="P:DNA repair"/>
    <property type="evidence" value="ECO:0007669"/>
    <property type="project" value="UniProtKB-UniRule"/>
</dbReference>
<dbReference type="GO" id="GO:0009432">
    <property type="term" value="P:SOS response"/>
    <property type="evidence" value="ECO:0007669"/>
    <property type="project" value="UniProtKB-UniRule"/>
</dbReference>
<dbReference type="CDD" id="cd00983">
    <property type="entry name" value="RecA"/>
    <property type="match status" value="1"/>
</dbReference>
<dbReference type="FunFam" id="3.40.50.300:FF:000087">
    <property type="entry name" value="Recombinase RecA"/>
    <property type="match status" value="1"/>
</dbReference>
<dbReference type="Gene3D" id="3.40.50.300">
    <property type="entry name" value="P-loop containing nucleotide triphosphate hydrolases"/>
    <property type="match status" value="1"/>
</dbReference>
<dbReference type="HAMAP" id="MF_00268">
    <property type="entry name" value="RecA"/>
    <property type="match status" value="1"/>
</dbReference>
<dbReference type="InterPro" id="IPR003593">
    <property type="entry name" value="AAA+_ATPase"/>
</dbReference>
<dbReference type="InterPro" id="IPR013765">
    <property type="entry name" value="DNA_recomb/repair_RecA"/>
</dbReference>
<dbReference type="InterPro" id="IPR020584">
    <property type="entry name" value="DNA_recomb/repair_RecA_CS"/>
</dbReference>
<dbReference type="InterPro" id="IPR027417">
    <property type="entry name" value="P-loop_NTPase"/>
</dbReference>
<dbReference type="InterPro" id="IPR049261">
    <property type="entry name" value="RecA-like_C"/>
</dbReference>
<dbReference type="InterPro" id="IPR049428">
    <property type="entry name" value="RecA-like_N"/>
</dbReference>
<dbReference type="InterPro" id="IPR020588">
    <property type="entry name" value="RecA_ATP-bd"/>
</dbReference>
<dbReference type="InterPro" id="IPR023400">
    <property type="entry name" value="RecA_C_sf"/>
</dbReference>
<dbReference type="InterPro" id="IPR020587">
    <property type="entry name" value="RecA_monomer-monomer_interface"/>
</dbReference>
<dbReference type="NCBIfam" id="TIGR02012">
    <property type="entry name" value="tigrfam_recA"/>
    <property type="match status" value="1"/>
</dbReference>
<dbReference type="PANTHER" id="PTHR45900:SF1">
    <property type="entry name" value="MITOCHONDRIAL DNA REPAIR PROTEIN RECA HOMOLOG-RELATED"/>
    <property type="match status" value="1"/>
</dbReference>
<dbReference type="PANTHER" id="PTHR45900">
    <property type="entry name" value="RECA"/>
    <property type="match status" value="1"/>
</dbReference>
<dbReference type="Pfam" id="PF00154">
    <property type="entry name" value="RecA"/>
    <property type="match status" value="1"/>
</dbReference>
<dbReference type="Pfam" id="PF21096">
    <property type="entry name" value="RecA_C"/>
    <property type="match status" value="1"/>
</dbReference>
<dbReference type="PRINTS" id="PR00142">
    <property type="entry name" value="RECA"/>
</dbReference>
<dbReference type="SMART" id="SM00382">
    <property type="entry name" value="AAA"/>
    <property type="match status" value="1"/>
</dbReference>
<dbReference type="SUPFAM" id="SSF52540">
    <property type="entry name" value="P-loop containing nucleoside triphosphate hydrolases"/>
    <property type="match status" value="1"/>
</dbReference>
<dbReference type="SUPFAM" id="SSF54752">
    <property type="entry name" value="RecA protein, C-terminal domain"/>
    <property type="match status" value="1"/>
</dbReference>
<dbReference type="PROSITE" id="PS00321">
    <property type="entry name" value="RECA_1"/>
    <property type="match status" value="1"/>
</dbReference>
<dbReference type="PROSITE" id="PS50162">
    <property type="entry name" value="RECA_2"/>
    <property type="match status" value="1"/>
</dbReference>
<dbReference type="PROSITE" id="PS50163">
    <property type="entry name" value="RECA_3"/>
    <property type="match status" value="1"/>
</dbReference>
<keyword id="KW-0067">ATP-binding</keyword>
<keyword id="KW-0963">Cytoplasm</keyword>
<keyword id="KW-0227">DNA damage</keyword>
<keyword id="KW-0233">DNA recombination</keyword>
<keyword id="KW-0234">DNA repair</keyword>
<keyword id="KW-0238">DNA-binding</keyword>
<keyword id="KW-0547">Nucleotide-binding</keyword>
<keyword id="KW-0742">SOS response</keyword>
<organism>
    <name type="scientific">Francisella tularensis subsp. novicida (strain U112)</name>
    <dbReference type="NCBI Taxonomy" id="401614"/>
    <lineage>
        <taxon>Bacteria</taxon>
        <taxon>Pseudomonadati</taxon>
        <taxon>Pseudomonadota</taxon>
        <taxon>Gammaproteobacteria</taxon>
        <taxon>Thiotrichales</taxon>
        <taxon>Francisellaceae</taxon>
        <taxon>Francisella</taxon>
    </lineage>
</organism>
<sequence length="359" mass="38844">MSKEKALESALSQIEKQFGKGAIMRLGDQEAAHDIDVIPSGIIALDVALGIGGYPKGRIIEIYGHESSGKTTLTLLAIAQCQKQGGTAAFVDAEHALDPKYAKLLGVDVDNLIVSQPDTGEQALEIADMLVRSGGVDIVVIDSVAALTPKAEIEGDMGDSHMGLQARLMSQALRKLTANIKRSNTLVIFINQIRMKIGVMFGNPETTTGGNALKFYSSVRLEVKKGGSIKDGIDVSGNEIKVKVVKNKVAPPFKQADFELIYGEGISLEAELIDLGAKYNIIEKSGAWYSYKGKKIGQGKEKSKEYLKENTAERDEIERAILELLLPNKYPNKDSNDSPKEGSKIKTKVNPAVTQDELI</sequence>
<gene>
    <name evidence="1" type="primary">recA</name>
    <name type="ordered locus">FTN_0122</name>
</gene>
<evidence type="ECO:0000255" key="1">
    <source>
        <dbReference type="HAMAP-Rule" id="MF_00268"/>
    </source>
</evidence>
<evidence type="ECO:0000256" key="2">
    <source>
        <dbReference type="SAM" id="MobiDB-lite"/>
    </source>
</evidence>
<reference key="1">
    <citation type="journal article" date="2007" name="Genome Biol.">
        <title>Comparison of Francisella tularensis genomes reveals evolutionary events associated with the emergence of human pathogenic strains.</title>
        <authorList>
            <person name="Rohmer L."/>
            <person name="Fong C."/>
            <person name="Abmayr S."/>
            <person name="Wasnick M."/>
            <person name="Larson Freeman T.J."/>
            <person name="Radey M."/>
            <person name="Guina T."/>
            <person name="Svensson K."/>
            <person name="Hayden H.S."/>
            <person name="Jacobs M."/>
            <person name="Gallagher L.A."/>
            <person name="Manoil C."/>
            <person name="Ernst R.K."/>
            <person name="Drees B."/>
            <person name="Buckley D."/>
            <person name="Haugen E."/>
            <person name="Bovee D."/>
            <person name="Zhou Y."/>
            <person name="Chang J."/>
            <person name="Levy R."/>
            <person name="Lim R."/>
            <person name="Gillett W."/>
            <person name="Guenthener D."/>
            <person name="Kang A."/>
            <person name="Shaffer S.A."/>
            <person name="Taylor G."/>
            <person name="Chen J."/>
            <person name="Gallis B."/>
            <person name="D'Argenio D.A."/>
            <person name="Forsman M."/>
            <person name="Olson M.V."/>
            <person name="Goodlett D.R."/>
            <person name="Kaul R."/>
            <person name="Miller S.I."/>
            <person name="Brittnacher M.J."/>
        </authorList>
    </citation>
    <scope>NUCLEOTIDE SEQUENCE [LARGE SCALE GENOMIC DNA]</scope>
    <source>
        <strain>U112</strain>
    </source>
</reference>
<name>RECA_FRATN</name>
<accession>A0Q468</accession>
<feature type="chain" id="PRO_1000047922" description="Protein RecA">
    <location>
        <begin position="1"/>
        <end position="359"/>
    </location>
</feature>
<feature type="region of interest" description="Disordered" evidence="2">
    <location>
        <begin position="328"/>
        <end position="359"/>
    </location>
</feature>
<feature type="compositionally biased region" description="Basic and acidic residues" evidence="2">
    <location>
        <begin position="331"/>
        <end position="344"/>
    </location>
</feature>
<feature type="binding site" evidence="1">
    <location>
        <begin position="64"/>
        <end position="71"/>
    </location>
    <ligand>
        <name>ATP</name>
        <dbReference type="ChEBI" id="CHEBI:30616"/>
    </ligand>
</feature>
<protein>
    <recommendedName>
        <fullName evidence="1">Protein RecA</fullName>
    </recommendedName>
    <alternativeName>
        <fullName evidence="1">Recombinase A</fullName>
    </alternativeName>
</protein>